<accession>Q2JVI1</accession>
<evidence type="ECO:0000250" key="1">
    <source>
        <dbReference type="UniProtKB" id="Q9KNM4"/>
    </source>
</evidence>
<evidence type="ECO:0000250" key="2">
    <source>
        <dbReference type="UniProtKB" id="Q9KTX4"/>
    </source>
</evidence>
<evidence type="ECO:0000255" key="3">
    <source>
        <dbReference type="HAMAP-Rule" id="MF_00451"/>
    </source>
</evidence>
<gene>
    <name evidence="3" type="primary">ndk</name>
    <name type="ordered locus">CYA_1063</name>
</gene>
<comment type="function">
    <text evidence="3">Major role in the synthesis of nucleoside triphosphates other than ATP. The ATP gamma phosphate is transferred to the NDP beta phosphate via a ping-pong mechanism, using a phosphorylated active-site intermediate.</text>
</comment>
<comment type="function">
    <text evidence="1">(Microbial infection) Catalyzes the phosphorylation of dZDP to dZTP, when the bacterium is infected by a phage that produces the substrate for the synthesis of dZTP (2- amino-2'-deoxyadenosine 5'-triphosphate), which is then used by the phage as a DNA polymerase substrate.</text>
</comment>
<comment type="catalytic activity">
    <reaction evidence="2">
        <text>dZDP + ATP = dZTP + ADP</text>
        <dbReference type="Rhea" id="RHEA:67644"/>
        <dbReference type="ChEBI" id="CHEBI:30616"/>
        <dbReference type="ChEBI" id="CHEBI:172929"/>
        <dbReference type="ChEBI" id="CHEBI:172931"/>
        <dbReference type="ChEBI" id="CHEBI:456216"/>
    </reaction>
</comment>
<comment type="catalytic activity">
    <reaction evidence="3">
        <text>a 2'-deoxyribonucleoside 5'-diphosphate + ATP = a 2'-deoxyribonucleoside 5'-triphosphate + ADP</text>
        <dbReference type="Rhea" id="RHEA:44640"/>
        <dbReference type="ChEBI" id="CHEBI:30616"/>
        <dbReference type="ChEBI" id="CHEBI:61560"/>
        <dbReference type="ChEBI" id="CHEBI:73316"/>
        <dbReference type="ChEBI" id="CHEBI:456216"/>
        <dbReference type="EC" id="2.7.4.6"/>
    </reaction>
</comment>
<comment type="catalytic activity">
    <reaction evidence="3">
        <text>a ribonucleoside 5'-diphosphate + ATP = a ribonucleoside 5'-triphosphate + ADP</text>
        <dbReference type="Rhea" id="RHEA:18113"/>
        <dbReference type="ChEBI" id="CHEBI:30616"/>
        <dbReference type="ChEBI" id="CHEBI:57930"/>
        <dbReference type="ChEBI" id="CHEBI:61557"/>
        <dbReference type="ChEBI" id="CHEBI:456216"/>
        <dbReference type="EC" id="2.7.4.6"/>
    </reaction>
</comment>
<comment type="cofactor">
    <cofactor evidence="3">
        <name>Mg(2+)</name>
        <dbReference type="ChEBI" id="CHEBI:18420"/>
    </cofactor>
</comment>
<comment type="pathway">
    <text evidence="2">Purine metabolism.</text>
</comment>
<comment type="subunit">
    <text evidence="3">Homotetramer.</text>
</comment>
<comment type="subcellular location">
    <subcellularLocation>
        <location evidence="3">Cytoplasm</location>
    </subcellularLocation>
</comment>
<comment type="similarity">
    <text evidence="3">Belongs to the NDK family.</text>
</comment>
<sequence>MERTFIAIKPDGVQRGLVGSIIQRLESRGYQLVGLKLVQVSQELAEAHYAEHRERPFFPGLVKFITSGPVVAMVWQGKGVIAAARKLIGKTNPLDAEPGTIRGDFGIDIGRNLVHGSDGPETAQREIALWFQESELVNWTPATQSWIYE</sequence>
<proteinExistence type="inferred from homology"/>
<keyword id="KW-0067">ATP-binding</keyword>
<keyword id="KW-0963">Cytoplasm</keyword>
<keyword id="KW-0418">Kinase</keyword>
<keyword id="KW-0460">Magnesium</keyword>
<keyword id="KW-0479">Metal-binding</keyword>
<keyword id="KW-0546">Nucleotide metabolism</keyword>
<keyword id="KW-0547">Nucleotide-binding</keyword>
<keyword id="KW-0597">Phosphoprotein</keyword>
<keyword id="KW-0808">Transferase</keyword>
<protein>
    <recommendedName>
        <fullName evidence="3">Nucleoside diphosphate kinase</fullName>
        <shortName evidence="3">NDK</shortName>
        <shortName evidence="3">NDP kinase</shortName>
        <ecNumber evidence="3">2.7.4.6</ecNumber>
    </recommendedName>
    <alternativeName>
        <fullName evidence="3">Nucleoside-2-P kinase</fullName>
    </alternativeName>
</protein>
<organism>
    <name type="scientific">Synechococcus sp. (strain JA-3-3Ab)</name>
    <name type="common">Cyanobacteria bacterium Yellowstone A-Prime</name>
    <dbReference type="NCBI Taxonomy" id="321327"/>
    <lineage>
        <taxon>Bacteria</taxon>
        <taxon>Bacillati</taxon>
        <taxon>Cyanobacteriota</taxon>
        <taxon>Cyanophyceae</taxon>
        <taxon>Synechococcales</taxon>
        <taxon>Synechococcaceae</taxon>
        <taxon>Synechococcus</taxon>
    </lineage>
</organism>
<name>NDK_SYNJA</name>
<reference key="1">
    <citation type="journal article" date="2007" name="ISME J.">
        <title>Population level functional diversity in a microbial community revealed by comparative genomic and metagenomic analyses.</title>
        <authorList>
            <person name="Bhaya D."/>
            <person name="Grossman A.R."/>
            <person name="Steunou A.-S."/>
            <person name="Khuri N."/>
            <person name="Cohan F.M."/>
            <person name="Hamamura N."/>
            <person name="Melendrez M.C."/>
            <person name="Bateson M.M."/>
            <person name="Ward D.M."/>
            <person name="Heidelberg J.F."/>
        </authorList>
    </citation>
    <scope>NUCLEOTIDE SEQUENCE [LARGE SCALE GENOMIC DNA]</scope>
    <source>
        <strain>JA-3-3Ab</strain>
    </source>
</reference>
<dbReference type="EC" id="2.7.4.6" evidence="3"/>
<dbReference type="EMBL" id="CP000239">
    <property type="protein sequence ID" value="ABC99258.1"/>
    <property type="molecule type" value="Genomic_DNA"/>
</dbReference>
<dbReference type="RefSeq" id="WP_011429941.1">
    <property type="nucleotide sequence ID" value="NC_007775.1"/>
</dbReference>
<dbReference type="SMR" id="Q2JVI1"/>
<dbReference type="STRING" id="321327.CYA_1063"/>
<dbReference type="KEGG" id="cya:CYA_1063"/>
<dbReference type="eggNOG" id="COG0105">
    <property type="taxonomic scope" value="Bacteria"/>
</dbReference>
<dbReference type="HOGENOM" id="CLU_060216_6_3_3"/>
<dbReference type="OrthoDB" id="9801161at2"/>
<dbReference type="Proteomes" id="UP000008818">
    <property type="component" value="Chromosome"/>
</dbReference>
<dbReference type="GO" id="GO:0005737">
    <property type="term" value="C:cytoplasm"/>
    <property type="evidence" value="ECO:0007669"/>
    <property type="project" value="UniProtKB-SubCell"/>
</dbReference>
<dbReference type="GO" id="GO:0005524">
    <property type="term" value="F:ATP binding"/>
    <property type="evidence" value="ECO:0007669"/>
    <property type="project" value="UniProtKB-UniRule"/>
</dbReference>
<dbReference type="GO" id="GO:0046872">
    <property type="term" value="F:metal ion binding"/>
    <property type="evidence" value="ECO:0007669"/>
    <property type="project" value="UniProtKB-KW"/>
</dbReference>
<dbReference type="GO" id="GO:0004550">
    <property type="term" value="F:nucleoside diphosphate kinase activity"/>
    <property type="evidence" value="ECO:0007669"/>
    <property type="project" value="UniProtKB-UniRule"/>
</dbReference>
<dbReference type="GO" id="GO:0006241">
    <property type="term" value="P:CTP biosynthetic process"/>
    <property type="evidence" value="ECO:0007669"/>
    <property type="project" value="UniProtKB-UniRule"/>
</dbReference>
<dbReference type="GO" id="GO:0006183">
    <property type="term" value="P:GTP biosynthetic process"/>
    <property type="evidence" value="ECO:0007669"/>
    <property type="project" value="UniProtKB-UniRule"/>
</dbReference>
<dbReference type="GO" id="GO:0006228">
    <property type="term" value="P:UTP biosynthetic process"/>
    <property type="evidence" value="ECO:0007669"/>
    <property type="project" value="UniProtKB-UniRule"/>
</dbReference>
<dbReference type="CDD" id="cd04413">
    <property type="entry name" value="NDPk_I"/>
    <property type="match status" value="1"/>
</dbReference>
<dbReference type="FunFam" id="3.30.70.141:FF:000002">
    <property type="entry name" value="Nucleoside diphosphate kinase"/>
    <property type="match status" value="1"/>
</dbReference>
<dbReference type="Gene3D" id="3.30.70.141">
    <property type="entry name" value="Nucleoside diphosphate kinase-like domain"/>
    <property type="match status" value="1"/>
</dbReference>
<dbReference type="HAMAP" id="MF_00451">
    <property type="entry name" value="NDP_kinase"/>
    <property type="match status" value="1"/>
</dbReference>
<dbReference type="InterPro" id="IPR034907">
    <property type="entry name" value="NDK-like_dom"/>
</dbReference>
<dbReference type="InterPro" id="IPR036850">
    <property type="entry name" value="NDK-like_dom_sf"/>
</dbReference>
<dbReference type="InterPro" id="IPR001564">
    <property type="entry name" value="Nucleoside_diP_kinase"/>
</dbReference>
<dbReference type="InterPro" id="IPR023005">
    <property type="entry name" value="Nucleoside_diP_kinase_AS"/>
</dbReference>
<dbReference type="NCBIfam" id="NF001908">
    <property type="entry name" value="PRK00668.1"/>
    <property type="match status" value="1"/>
</dbReference>
<dbReference type="PANTHER" id="PTHR11349">
    <property type="entry name" value="NUCLEOSIDE DIPHOSPHATE KINASE"/>
    <property type="match status" value="1"/>
</dbReference>
<dbReference type="Pfam" id="PF00334">
    <property type="entry name" value="NDK"/>
    <property type="match status" value="1"/>
</dbReference>
<dbReference type="PRINTS" id="PR01243">
    <property type="entry name" value="NUCDPKINASE"/>
</dbReference>
<dbReference type="SMART" id="SM00562">
    <property type="entry name" value="NDK"/>
    <property type="match status" value="1"/>
</dbReference>
<dbReference type="SUPFAM" id="SSF54919">
    <property type="entry name" value="Nucleoside diphosphate kinase, NDK"/>
    <property type="match status" value="1"/>
</dbReference>
<dbReference type="PROSITE" id="PS00469">
    <property type="entry name" value="NDPK"/>
    <property type="match status" value="1"/>
</dbReference>
<dbReference type="PROSITE" id="PS51374">
    <property type="entry name" value="NDPK_LIKE"/>
    <property type="match status" value="1"/>
</dbReference>
<feature type="chain" id="PRO_0000242522" description="Nucleoside diphosphate kinase">
    <location>
        <begin position="1"/>
        <end position="149"/>
    </location>
</feature>
<feature type="active site" description="Pros-phosphohistidine intermediate" evidence="3">
    <location>
        <position position="115"/>
    </location>
</feature>
<feature type="binding site" evidence="3">
    <location>
        <position position="9"/>
    </location>
    <ligand>
        <name>ATP</name>
        <dbReference type="ChEBI" id="CHEBI:30616"/>
    </ligand>
</feature>
<feature type="binding site" evidence="3">
    <location>
        <position position="57"/>
    </location>
    <ligand>
        <name>ATP</name>
        <dbReference type="ChEBI" id="CHEBI:30616"/>
    </ligand>
</feature>
<feature type="binding site" evidence="3">
    <location>
        <position position="85"/>
    </location>
    <ligand>
        <name>ATP</name>
        <dbReference type="ChEBI" id="CHEBI:30616"/>
    </ligand>
</feature>
<feature type="binding site" evidence="3">
    <location>
        <position position="91"/>
    </location>
    <ligand>
        <name>ATP</name>
        <dbReference type="ChEBI" id="CHEBI:30616"/>
    </ligand>
</feature>
<feature type="binding site" evidence="3">
    <location>
        <position position="102"/>
    </location>
    <ligand>
        <name>ATP</name>
        <dbReference type="ChEBI" id="CHEBI:30616"/>
    </ligand>
</feature>
<feature type="binding site" evidence="3">
    <location>
        <position position="112"/>
    </location>
    <ligand>
        <name>ATP</name>
        <dbReference type="ChEBI" id="CHEBI:30616"/>
    </ligand>
</feature>